<name>NUOH_BARQU</name>
<organism>
    <name type="scientific">Bartonella quintana (strain Toulouse)</name>
    <name type="common">Rochalimaea quintana</name>
    <dbReference type="NCBI Taxonomy" id="283165"/>
    <lineage>
        <taxon>Bacteria</taxon>
        <taxon>Pseudomonadati</taxon>
        <taxon>Pseudomonadota</taxon>
        <taxon>Alphaproteobacteria</taxon>
        <taxon>Hyphomicrobiales</taxon>
        <taxon>Bartonellaceae</taxon>
        <taxon>Bartonella</taxon>
    </lineage>
</organism>
<accession>Q6FZY4</accession>
<evidence type="ECO:0000255" key="1">
    <source>
        <dbReference type="HAMAP-Rule" id="MF_01350"/>
    </source>
</evidence>
<protein>
    <recommendedName>
        <fullName evidence="1">NADH-quinone oxidoreductase subunit H</fullName>
        <ecNumber evidence="1">7.1.1.-</ecNumber>
    </recommendedName>
    <alternativeName>
        <fullName evidence="1">NADH dehydrogenase I subunit H</fullName>
    </alternativeName>
    <alternativeName>
        <fullName evidence="1">NDH-1 subunit H</fullName>
    </alternativeName>
</protein>
<reference key="1">
    <citation type="journal article" date="2004" name="Proc. Natl. Acad. Sci. U.S.A.">
        <title>The louse-borne human pathogen Bartonella quintana is a genomic derivative of the zoonotic agent Bartonella henselae.</title>
        <authorList>
            <person name="Alsmark U.C.M."/>
            <person name="Frank A.C."/>
            <person name="Karlberg E.O."/>
            <person name="Legault B.-A."/>
            <person name="Ardell D.H."/>
            <person name="Canbaeck B."/>
            <person name="Eriksson A.-S."/>
            <person name="Naeslund A.K."/>
            <person name="Handley S.A."/>
            <person name="Huvet M."/>
            <person name="La Scola B."/>
            <person name="Holmberg M."/>
            <person name="Andersson S.G.E."/>
        </authorList>
    </citation>
    <scope>NUCLEOTIDE SEQUENCE [LARGE SCALE GENOMIC DNA]</scope>
    <source>
        <strain>Toulouse</strain>
    </source>
</reference>
<dbReference type="EC" id="7.1.1.-" evidence="1"/>
<dbReference type="EMBL" id="BX897700">
    <property type="protein sequence ID" value="CAF26063.1"/>
    <property type="molecule type" value="Genomic_DNA"/>
</dbReference>
<dbReference type="RefSeq" id="WP_011179333.1">
    <property type="nucleotide sequence ID" value="NC_005955.1"/>
</dbReference>
<dbReference type="SMR" id="Q6FZY4"/>
<dbReference type="KEGG" id="bqu:BQ05710"/>
<dbReference type="eggNOG" id="COG1005">
    <property type="taxonomic scope" value="Bacteria"/>
</dbReference>
<dbReference type="HOGENOM" id="CLU_015134_0_1_5"/>
<dbReference type="OrthoDB" id="9803734at2"/>
<dbReference type="Proteomes" id="UP000000597">
    <property type="component" value="Chromosome"/>
</dbReference>
<dbReference type="GO" id="GO:0005886">
    <property type="term" value="C:plasma membrane"/>
    <property type="evidence" value="ECO:0007669"/>
    <property type="project" value="UniProtKB-SubCell"/>
</dbReference>
<dbReference type="GO" id="GO:0003954">
    <property type="term" value="F:NADH dehydrogenase activity"/>
    <property type="evidence" value="ECO:0007669"/>
    <property type="project" value="TreeGrafter"/>
</dbReference>
<dbReference type="GO" id="GO:0016655">
    <property type="term" value="F:oxidoreductase activity, acting on NAD(P)H, quinone or similar compound as acceptor"/>
    <property type="evidence" value="ECO:0007669"/>
    <property type="project" value="UniProtKB-UniRule"/>
</dbReference>
<dbReference type="GO" id="GO:0048038">
    <property type="term" value="F:quinone binding"/>
    <property type="evidence" value="ECO:0007669"/>
    <property type="project" value="UniProtKB-KW"/>
</dbReference>
<dbReference type="GO" id="GO:0009060">
    <property type="term" value="P:aerobic respiration"/>
    <property type="evidence" value="ECO:0007669"/>
    <property type="project" value="TreeGrafter"/>
</dbReference>
<dbReference type="HAMAP" id="MF_01350">
    <property type="entry name" value="NDH1_NuoH"/>
    <property type="match status" value="1"/>
</dbReference>
<dbReference type="InterPro" id="IPR001694">
    <property type="entry name" value="NADH_UbQ_OxRdtase_su1/FPO"/>
</dbReference>
<dbReference type="InterPro" id="IPR018086">
    <property type="entry name" value="NADH_UbQ_OxRdtase_su1_CS"/>
</dbReference>
<dbReference type="NCBIfam" id="NF004741">
    <property type="entry name" value="PRK06076.1-2"/>
    <property type="match status" value="1"/>
</dbReference>
<dbReference type="NCBIfam" id="NF004745">
    <property type="entry name" value="PRK06076.1-6"/>
    <property type="match status" value="1"/>
</dbReference>
<dbReference type="PANTHER" id="PTHR11432">
    <property type="entry name" value="NADH DEHYDROGENASE SUBUNIT 1"/>
    <property type="match status" value="1"/>
</dbReference>
<dbReference type="PANTHER" id="PTHR11432:SF3">
    <property type="entry name" value="NADH-UBIQUINONE OXIDOREDUCTASE CHAIN 1"/>
    <property type="match status" value="1"/>
</dbReference>
<dbReference type="Pfam" id="PF00146">
    <property type="entry name" value="NADHdh"/>
    <property type="match status" value="1"/>
</dbReference>
<dbReference type="PROSITE" id="PS00668">
    <property type="entry name" value="COMPLEX1_ND1_2"/>
    <property type="match status" value="1"/>
</dbReference>
<keyword id="KW-0997">Cell inner membrane</keyword>
<keyword id="KW-1003">Cell membrane</keyword>
<keyword id="KW-0472">Membrane</keyword>
<keyword id="KW-0520">NAD</keyword>
<keyword id="KW-0874">Quinone</keyword>
<keyword id="KW-1278">Translocase</keyword>
<keyword id="KW-0812">Transmembrane</keyword>
<keyword id="KW-1133">Transmembrane helix</keyword>
<keyword id="KW-0830">Ubiquinone</keyword>
<sequence>MDDFFMIWLLPLLIIVGKTLLLLVVLLVLVAYLLYADRKIWAAVQLRRGPNVVGPWGLLQSFADLIKFVVKEPIIPAGANKGVFLLAPFVSATLALSTWAVIPVNEGWEVAKINVGLLYILAISSLEVYGVIMGGWASNSKYPFLGALRSAAQMVSYEVSIGFVLVTVILVSGSLDLTTIVHKQSYGIGTTLGFPFNSFLDWNWLVLFPMFIIFFISALAETNRPPFDLVEAESELVAGHMVEYSSTPYMLFFLGEYVAIVLMCALTTILFLGGWLPPLDVWWLNWVPGIIWFVLKVCFVFFWFAMVKAFVPRYRYDQLMRLGWKVFLPFSLAMVVITATFLKYTGFA</sequence>
<comment type="function">
    <text evidence="1">NDH-1 shuttles electrons from NADH, via FMN and iron-sulfur (Fe-S) centers, to quinones in the respiratory chain. The immediate electron acceptor for the enzyme in this species is believed to be ubiquinone. Couples the redox reaction to proton translocation (for every two electrons transferred, four hydrogen ions are translocated across the cytoplasmic membrane), and thus conserves the redox energy in a proton gradient. This subunit may bind ubiquinone.</text>
</comment>
<comment type="catalytic activity">
    <reaction evidence="1">
        <text>a quinone + NADH + 5 H(+)(in) = a quinol + NAD(+) + 4 H(+)(out)</text>
        <dbReference type="Rhea" id="RHEA:57888"/>
        <dbReference type="ChEBI" id="CHEBI:15378"/>
        <dbReference type="ChEBI" id="CHEBI:24646"/>
        <dbReference type="ChEBI" id="CHEBI:57540"/>
        <dbReference type="ChEBI" id="CHEBI:57945"/>
        <dbReference type="ChEBI" id="CHEBI:132124"/>
    </reaction>
</comment>
<comment type="subunit">
    <text evidence="1">NDH-1 is composed of 14 different subunits. Subunits NuoA, H, J, K, L, M, N constitute the membrane sector of the complex.</text>
</comment>
<comment type="subcellular location">
    <subcellularLocation>
        <location evidence="1">Cell inner membrane</location>
        <topology evidence="1">Multi-pass membrane protein</topology>
    </subcellularLocation>
</comment>
<comment type="similarity">
    <text evidence="1">Belongs to the complex I subunit 1 family.</text>
</comment>
<proteinExistence type="inferred from homology"/>
<feature type="chain" id="PRO_0000244893" description="NADH-quinone oxidoreductase subunit H">
    <location>
        <begin position="1"/>
        <end position="348"/>
    </location>
</feature>
<feature type="transmembrane region" description="Helical" evidence="1">
    <location>
        <begin position="7"/>
        <end position="27"/>
    </location>
</feature>
<feature type="transmembrane region" description="Helical" evidence="1">
    <location>
        <begin position="82"/>
        <end position="102"/>
    </location>
</feature>
<feature type="transmembrane region" description="Helical" evidence="1">
    <location>
        <begin position="115"/>
        <end position="135"/>
    </location>
</feature>
<feature type="transmembrane region" description="Helical" evidence="1">
    <location>
        <begin position="161"/>
        <end position="181"/>
    </location>
</feature>
<feature type="transmembrane region" description="Helical" evidence="1">
    <location>
        <begin position="199"/>
        <end position="219"/>
    </location>
</feature>
<feature type="transmembrane region" description="Helical" evidence="1">
    <location>
        <begin position="251"/>
        <end position="271"/>
    </location>
</feature>
<feature type="transmembrane region" description="Helical" evidence="1">
    <location>
        <begin position="287"/>
        <end position="307"/>
    </location>
</feature>
<feature type="transmembrane region" description="Helical" evidence="1">
    <location>
        <begin position="322"/>
        <end position="342"/>
    </location>
</feature>
<gene>
    <name evidence="1" type="primary">nuoH</name>
    <name type="ordered locus">BQ05710</name>
</gene>